<reference key="1">
    <citation type="submission" date="2006-12" db="EMBL/GenBank/DDBJ databases">
        <title>Complete sequence of Shewanella amazonensis SB2B.</title>
        <authorList>
            <consortium name="US DOE Joint Genome Institute"/>
            <person name="Copeland A."/>
            <person name="Lucas S."/>
            <person name="Lapidus A."/>
            <person name="Barry K."/>
            <person name="Detter J.C."/>
            <person name="Glavina del Rio T."/>
            <person name="Hammon N."/>
            <person name="Israni S."/>
            <person name="Dalin E."/>
            <person name="Tice H."/>
            <person name="Pitluck S."/>
            <person name="Munk A.C."/>
            <person name="Brettin T."/>
            <person name="Bruce D."/>
            <person name="Han C."/>
            <person name="Tapia R."/>
            <person name="Gilna P."/>
            <person name="Schmutz J."/>
            <person name="Larimer F."/>
            <person name="Land M."/>
            <person name="Hauser L."/>
            <person name="Kyrpides N."/>
            <person name="Mikhailova N."/>
            <person name="Fredrickson J."/>
            <person name="Richardson P."/>
        </authorList>
    </citation>
    <scope>NUCLEOTIDE SEQUENCE [LARGE SCALE GENOMIC DNA]</scope>
    <source>
        <strain>ATCC BAA-1098 / SB2B</strain>
    </source>
</reference>
<name>TYPH_SHEAM</name>
<keyword id="KW-0328">Glycosyltransferase</keyword>
<keyword id="KW-1185">Reference proteome</keyword>
<keyword id="KW-0808">Transferase</keyword>
<organism>
    <name type="scientific">Shewanella amazonensis (strain ATCC BAA-1098 / SB2B)</name>
    <dbReference type="NCBI Taxonomy" id="326297"/>
    <lineage>
        <taxon>Bacteria</taxon>
        <taxon>Pseudomonadati</taxon>
        <taxon>Pseudomonadota</taxon>
        <taxon>Gammaproteobacteria</taxon>
        <taxon>Alteromonadales</taxon>
        <taxon>Shewanellaceae</taxon>
        <taxon>Shewanella</taxon>
    </lineage>
</organism>
<comment type="function">
    <text evidence="1">The enzymes which catalyze the reversible phosphorolysis of pyrimidine nucleosides are involved in the degradation of these compounds and in their utilization as carbon and energy sources, or in the rescue of pyrimidine bases for nucleotide synthesis.</text>
</comment>
<comment type="catalytic activity">
    <reaction evidence="1">
        <text>thymidine + phosphate = 2-deoxy-alpha-D-ribose 1-phosphate + thymine</text>
        <dbReference type="Rhea" id="RHEA:16037"/>
        <dbReference type="ChEBI" id="CHEBI:17748"/>
        <dbReference type="ChEBI" id="CHEBI:17821"/>
        <dbReference type="ChEBI" id="CHEBI:43474"/>
        <dbReference type="ChEBI" id="CHEBI:57259"/>
        <dbReference type="EC" id="2.4.2.4"/>
    </reaction>
</comment>
<comment type="pathway">
    <text evidence="1">Pyrimidine metabolism; dTMP biosynthesis via salvage pathway; dTMP from thymine: step 1/2.</text>
</comment>
<comment type="subunit">
    <text evidence="1">Homodimer.</text>
</comment>
<comment type="similarity">
    <text evidence="1">Belongs to the thymidine/pyrimidine-nucleoside phosphorylase family.</text>
</comment>
<sequence length="443" mass="46931">MFLAQEIIRKKRNAEALSKEEIQFFVKGITDNSVSEGQIAALGMAVYFNDMTMDERIALTTAMRDSGTVLNWDSLGLNGPVIDKHSTGGVGDVISLMLGPMAAACGGYVPMISGRGLGHTGGTLDKFDAIPGYQTEPSSELFRKVVKEAGVAIIGQTGDLVPADKRFYSIRDNTATVESISLITASILSKKLAAGLDALAMDVKVGSGAFMPTYEASLELARSITAVANGAGTKTTALLTDMNQVLASCAGNALEVKEAVDFLTGKYRNPRLYEVTMGLCAEMLVLGGLAANDADARTKLNTVLDNGRAAEIFGKMVSGLGGPADFVESYDKYLPKASIIRPVYAERDGFAYSMVTRELGLAVVTLGGGRRKPGDALDYSVGLSNVCALGQPINKDTPLAVIHAQSEAAFEEAARAVRGAITVSDKQPEKTPEIYQYVRAEDL</sequence>
<feature type="chain" id="PRO_1000069665" description="Thymidine phosphorylase">
    <location>
        <begin position="1"/>
        <end position="443"/>
    </location>
</feature>
<proteinExistence type="inferred from homology"/>
<dbReference type="EC" id="2.4.2.4" evidence="1"/>
<dbReference type="EMBL" id="CP000507">
    <property type="protein sequence ID" value="ABL99181.1"/>
    <property type="molecule type" value="Genomic_DNA"/>
</dbReference>
<dbReference type="RefSeq" id="WP_011759090.1">
    <property type="nucleotide sequence ID" value="NC_008700.1"/>
</dbReference>
<dbReference type="SMR" id="A1S475"/>
<dbReference type="STRING" id="326297.Sama_0974"/>
<dbReference type="KEGG" id="saz:Sama_0974"/>
<dbReference type="eggNOG" id="COG0213">
    <property type="taxonomic scope" value="Bacteria"/>
</dbReference>
<dbReference type="HOGENOM" id="CLU_025040_0_1_6"/>
<dbReference type="OrthoDB" id="9763887at2"/>
<dbReference type="UniPathway" id="UPA00578">
    <property type="reaction ID" value="UER00638"/>
</dbReference>
<dbReference type="Proteomes" id="UP000009175">
    <property type="component" value="Chromosome"/>
</dbReference>
<dbReference type="GO" id="GO:0005829">
    <property type="term" value="C:cytosol"/>
    <property type="evidence" value="ECO:0007669"/>
    <property type="project" value="TreeGrafter"/>
</dbReference>
<dbReference type="GO" id="GO:0004645">
    <property type="term" value="F:1,4-alpha-oligoglucan phosphorylase activity"/>
    <property type="evidence" value="ECO:0007669"/>
    <property type="project" value="InterPro"/>
</dbReference>
<dbReference type="GO" id="GO:0009032">
    <property type="term" value="F:thymidine phosphorylase activity"/>
    <property type="evidence" value="ECO:0007669"/>
    <property type="project" value="UniProtKB-UniRule"/>
</dbReference>
<dbReference type="GO" id="GO:0006206">
    <property type="term" value="P:pyrimidine nucleobase metabolic process"/>
    <property type="evidence" value="ECO:0007669"/>
    <property type="project" value="InterPro"/>
</dbReference>
<dbReference type="GO" id="GO:0046104">
    <property type="term" value="P:thymidine metabolic process"/>
    <property type="evidence" value="ECO:0007669"/>
    <property type="project" value="UniProtKB-UniRule"/>
</dbReference>
<dbReference type="FunFam" id="3.40.1030.10:FF:000001">
    <property type="entry name" value="Thymidine phosphorylase"/>
    <property type="match status" value="1"/>
</dbReference>
<dbReference type="FunFam" id="3.90.1170.30:FF:000001">
    <property type="entry name" value="Thymidine phosphorylase"/>
    <property type="match status" value="1"/>
</dbReference>
<dbReference type="Gene3D" id="3.40.1030.10">
    <property type="entry name" value="Nucleoside phosphorylase/phosphoribosyltransferase catalytic domain"/>
    <property type="match status" value="1"/>
</dbReference>
<dbReference type="Gene3D" id="3.90.1170.30">
    <property type="entry name" value="Pyrimidine nucleoside phosphorylase-like, C-terminal domain"/>
    <property type="match status" value="1"/>
</dbReference>
<dbReference type="Gene3D" id="1.20.970.10">
    <property type="entry name" value="Transferase, Pyrimidine Nucleoside Phosphorylase, Chain C"/>
    <property type="match status" value="1"/>
</dbReference>
<dbReference type="HAMAP" id="MF_01628">
    <property type="entry name" value="Thymid_phosp"/>
    <property type="match status" value="1"/>
</dbReference>
<dbReference type="InterPro" id="IPR000312">
    <property type="entry name" value="Glycosyl_Trfase_fam3"/>
</dbReference>
<dbReference type="InterPro" id="IPR017459">
    <property type="entry name" value="Glycosyl_Trfase_fam3_N_dom"/>
</dbReference>
<dbReference type="InterPro" id="IPR036320">
    <property type="entry name" value="Glycosyl_Trfase_fam3_N_dom_sf"/>
</dbReference>
<dbReference type="InterPro" id="IPR035902">
    <property type="entry name" value="Nuc_phospho_transferase"/>
</dbReference>
<dbReference type="InterPro" id="IPR036566">
    <property type="entry name" value="PYNP-like_C_sf"/>
</dbReference>
<dbReference type="InterPro" id="IPR013102">
    <property type="entry name" value="PYNP_C"/>
</dbReference>
<dbReference type="InterPro" id="IPR018090">
    <property type="entry name" value="Pyrmidine_PPas_bac/euk"/>
</dbReference>
<dbReference type="InterPro" id="IPR017872">
    <property type="entry name" value="Pyrmidine_PPase_CS"/>
</dbReference>
<dbReference type="InterPro" id="IPR000053">
    <property type="entry name" value="Thymidine/pyrmidine_PPase"/>
</dbReference>
<dbReference type="InterPro" id="IPR013465">
    <property type="entry name" value="Thymidine_Pase"/>
</dbReference>
<dbReference type="NCBIfam" id="NF004490">
    <property type="entry name" value="PRK05820.1"/>
    <property type="match status" value="1"/>
</dbReference>
<dbReference type="NCBIfam" id="TIGR02643">
    <property type="entry name" value="T_phosphoryl"/>
    <property type="match status" value="1"/>
</dbReference>
<dbReference type="NCBIfam" id="TIGR02644">
    <property type="entry name" value="Y_phosphoryl"/>
    <property type="match status" value="1"/>
</dbReference>
<dbReference type="PANTHER" id="PTHR10515">
    <property type="entry name" value="THYMIDINE PHOSPHORYLASE"/>
    <property type="match status" value="1"/>
</dbReference>
<dbReference type="PANTHER" id="PTHR10515:SF0">
    <property type="entry name" value="THYMIDINE PHOSPHORYLASE"/>
    <property type="match status" value="1"/>
</dbReference>
<dbReference type="Pfam" id="PF02885">
    <property type="entry name" value="Glycos_trans_3N"/>
    <property type="match status" value="1"/>
</dbReference>
<dbReference type="Pfam" id="PF00591">
    <property type="entry name" value="Glycos_transf_3"/>
    <property type="match status" value="1"/>
</dbReference>
<dbReference type="Pfam" id="PF07831">
    <property type="entry name" value="PYNP_C"/>
    <property type="match status" value="1"/>
</dbReference>
<dbReference type="PIRSF" id="PIRSF000478">
    <property type="entry name" value="TP_PyNP"/>
    <property type="match status" value="1"/>
</dbReference>
<dbReference type="SMART" id="SM00941">
    <property type="entry name" value="PYNP_C"/>
    <property type="match status" value="1"/>
</dbReference>
<dbReference type="SUPFAM" id="SSF52418">
    <property type="entry name" value="Nucleoside phosphorylase/phosphoribosyltransferase catalytic domain"/>
    <property type="match status" value="1"/>
</dbReference>
<dbReference type="SUPFAM" id="SSF47648">
    <property type="entry name" value="Nucleoside phosphorylase/phosphoribosyltransferase N-terminal domain"/>
    <property type="match status" value="1"/>
</dbReference>
<dbReference type="SUPFAM" id="SSF54680">
    <property type="entry name" value="Pyrimidine nucleoside phosphorylase C-terminal domain"/>
    <property type="match status" value="1"/>
</dbReference>
<dbReference type="PROSITE" id="PS00647">
    <property type="entry name" value="THYMID_PHOSPHORYLASE"/>
    <property type="match status" value="1"/>
</dbReference>
<accession>A1S475</accession>
<evidence type="ECO:0000255" key="1">
    <source>
        <dbReference type="HAMAP-Rule" id="MF_01628"/>
    </source>
</evidence>
<gene>
    <name evidence="1" type="primary">deoA</name>
    <name type="ordered locus">Sama_0974</name>
</gene>
<protein>
    <recommendedName>
        <fullName evidence="1">Thymidine phosphorylase</fullName>
        <ecNumber evidence="1">2.4.2.4</ecNumber>
    </recommendedName>
    <alternativeName>
        <fullName evidence="1">TdRPase</fullName>
    </alternativeName>
</protein>